<sequence>MNIQALLSEKVRQAMIAAGAPADCEPQVRQSAKVQFGDYQANGMMAVAKKLGMAPRQLAEQVLTHLDLNGIASKVEIAGPGFINIFLDPAFLAEHVQQALASDRLGVATPEKQTIVVDYSAPNVAKEMHVGHLRSTIIGDAAVRTLEFLGHKVIRANHVGDWGTQFGMLIAWLEKQQQENAGEMELADLEGFYRDAKKHYDEDEEFAERARNYVVKLQSGDEYFREMWRKLVDITMTQNQITYDRLNVTLTRDDVMGESLYNPMLPGIVADLKAKGLAVESEGASVVFLDEFKNKEGEPMGVIIQKKDGGYLYTTTDIACAKYRYETLHADRVLYYIDSRQHQHLMQAWAIVRKAGYVPESVPLEHHMFGMMLGKDGKPFKTRAGGTVKLADLLDEALERARRLVAEKNPDMPADELEKLANAVGIGAVKYADLSKNRTTDYIFDWDNMLAFEGNTAPYMQYAYTRVLSVFRKAEINEEQLAAAPVIIREDREAQLAARLLQFEETLTVVAREGTPHVMCAYLYDLAGLFSGFYEHCPILSAESEEVRNSRLKLAQLTAKTLKLGLDTLGIETVERM</sequence>
<protein>
    <recommendedName>
        <fullName evidence="1">Arginine--tRNA ligase</fullName>
        <ecNumber evidence="1">6.1.1.19</ecNumber>
    </recommendedName>
    <alternativeName>
        <fullName evidence="1">Arginyl-tRNA synthetase</fullName>
        <shortName evidence="1">ArgRS</shortName>
    </alternativeName>
</protein>
<accession>B7USQ3</accession>
<evidence type="ECO:0000255" key="1">
    <source>
        <dbReference type="HAMAP-Rule" id="MF_00123"/>
    </source>
</evidence>
<name>SYR_ECO27</name>
<feature type="chain" id="PRO_1000198903" description="Arginine--tRNA ligase">
    <location>
        <begin position="1"/>
        <end position="577"/>
    </location>
</feature>
<feature type="short sequence motif" description="'HIGH' region">
    <location>
        <begin position="122"/>
        <end position="132"/>
    </location>
</feature>
<organism>
    <name type="scientific">Escherichia coli O127:H6 (strain E2348/69 / EPEC)</name>
    <dbReference type="NCBI Taxonomy" id="574521"/>
    <lineage>
        <taxon>Bacteria</taxon>
        <taxon>Pseudomonadati</taxon>
        <taxon>Pseudomonadota</taxon>
        <taxon>Gammaproteobacteria</taxon>
        <taxon>Enterobacterales</taxon>
        <taxon>Enterobacteriaceae</taxon>
        <taxon>Escherichia</taxon>
    </lineage>
</organism>
<comment type="catalytic activity">
    <reaction evidence="1">
        <text>tRNA(Arg) + L-arginine + ATP = L-arginyl-tRNA(Arg) + AMP + diphosphate</text>
        <dbReference type="Rhea" id="RHEA:20301"/>
        <dbReference type="Rhea" id="RHEA-COMP:9658"/>
        <dbReference type="Rhea" id="RHEA-COMP:9673"/>
        <dbReference type="ChEBI" id="CHEBI:30616"/>
        <dbReference type="ChEBI" id="CHEBI:32682"/>
        <dbReference type="ChEBI" id="CHEBI:33019"/>
        <dbReference type="ChEBI" id="CHEBI:78442"/>
        <dbReference type="ChEBI" id="CHEBI:78513"/>
        <dbReference type="ChEBI" id="CHEBI:456215"/>
        <dbReference type="EC" id="6.1.1.19"/>
    </reaction>
</comment>
<comment type="subunit">
    <text evidence="1">Monomer.</text>
</comment>
<comment type="subcellular location">
    <subcellularLocation>
        <location evidence="1">Cytoplasm</location>
    </subcellularLocation>
</comment>
<comment type="similarity">
    <text evidence="1">Belongs to the class-I aminoacyl-tRNA synthetase family.</text>
</comment>
<keyword id="KW-0030">Aminoacyl-tRNA synthetase</keyword>
<keyword id="KW-0067">ATP-binding</keyword>
<keyword id="KW-0963">Cytoplasm</keyword>
<keyword id="KW-0436">Ligase</keyword>
<keyword id="KW-0547">Nucleotide-binding</keyword>
<keyword id="KW-0648">Protein biosynthesis</keyword>
<keyword id="KW-1185">Reference proteome</keyword>
<proteinExistence type="inferred from homology"/>
<reference key="1">
    <citation type="journal article" date="2009" name="J. Bacteriol.">
        <title>Complete genome sequence and comparative genome analysis of enteropathogenic Escherichia coli O127:H6 strain E2348/69.</title>
        <authorList>
            <person name="Iguchi A."/>
            <person name="Thomson N.R."/>
            <person name="Ogura Y."/>
            <person name="Saunders D."/>
            <person name="Ooka T."/>
            <person name="Henderson I.R."/>
            <person name="Harris D."/>
            <person name="Asadulghani M."/>
            <person name="Kurokawa K."/>
            <person name="Dean P."/>
            <person name="Kenny B."/>
            <person name="Quail M.A."/>
            <person name="Thurston S."/>
            <person name="Dougan G."/>
            <person name="Hayashi T."/>
            <person name="Parkhill J."/>
            <person name="Frankel G."/>
        </authorList>
    </citation>
    <scope>NUCLEOTIDE SEQUENCE [LARGE SCALE GENOMIC DNA]</scope>
    <source>
        <strain>E2348/69 / EPEC</strain>
    </source>
</reference>
<gene>
    <name evidence="1" type="primary">argS</name>
    <name type="ordered locus">E2348C_2001</name>
</gene>
<dbReference type="EC" id="6.1.1.19" evidence="1"/>
<dbReference type="EMBL" id="FM180568">
    <property type="protein sequence ID" value="CAS09549.1"/>
    <property type="molecule type" value="Genomic_DNA"/>
</dbReference>
<dbReference type="RefSeq" id="WP_001025321.1">
    <property type="nucleotide sequence ID" value="NC_011601.1"/>
</dbReference>
<dbReference type="SMR" id="B7USQ3"/>
<dbReference type="KEGG" id="ecg:E2348C_2001"/>
<dbReference type="HOGENOM" id="CLU_006406_5_1_6"/>
<dbReference type="Proteomes" id="UP000008205">
    <property type="component" value="Chromosome"/>
</dbReference>
<dbReference type="GO" id="GO:0005737">
    <property type="term" value="C:cytoplasm"/>
    <property type="evidence" value="ECO:0007669"/>
    <property type="project" value="UniProtKB-SubCell"/>
</dbReference>
<dbReference type="GO" id="GO:0004814">
    <property type="term" value="F:arginine-tRNA ligase activity"/>
    <property type="evidence" value="ECO:0007669"/>
    <property type="project" value="UniProtKB-UniRule"/>
</dbReference>
<dbReference type="GO" id="GO:0005524">
    <property type="term" value="F:ATP binding"/>
    <property type="evidence" value="ECO:0007669"/>
    <property type="project" value="UniProtKB-UniRule"/>
</dbReference>
<dbReference type="GO" id="GO:0006420">
    <property type="term" value="P:arginyl-tRNA aminoacylation"/>
    <property type="evidence" value="ECO:0007669"/>
    <property type="project" value="UniProtKB-UniRule"/>
</dbReference>
<dbReference type="CDD" id="cd07956">
    <property type="entry name" value="Anticodon_Ia_Arg"/>
    <property type="match status" value="1"/>
</dbReference>
<dbReference type="CDD" id="cd00671">
    <property type="entry name" value="ArgRS_core"/>
    <property type="match status" value="1"/>
</dbReference>
<dbReference type="FunFam" id="1.10.730.10:FF:000001">
    <property type="entry name" value="Arginine--tRNA ligase"/>
    <property type="match status" value="1"/>
</dbReference>
<dbReference type="FunFam" id="3.30.1360.70:FF:000001">
    <property type="entry name" value="Arginine--tRNA ligase"/>
    <property type="match status" value="1"/>
</dbReference>
<dbReference type="FunFam" id="3.40.50.620:FF:000030">
    <property type="entry name" value="Arginine--tRNA ligase"/>
    <property type="match status" value="1"/>
</dbReference>
<dbReference type="Gene3D" id="3.30.1360.70">
    <property type="entry name" value="Arginyl tRNA synthetase N-terminal domain"/>
    <property type="match status" value="1"/>
</dbReference>
<dbReference type="Gene3D" id="3.40.50.620">
    <property type="entry name" value="HUPs"/>
    <property type="match status" value="1"/>
</dbReference>
<dbReference type="Gene3D" id="1.10.730.10">
    <property type="entry name" value="Isoleucyl-tRNA Synthetase, Domain 1"/>
    <property type="match status" value="1"/>
</dbReference>
<dbReference type="HAMAP" id="MF_00123">
    <property type="entry name" value="Arg_tRNA_synth"/>
    <property type="match status" value="1"/>
</dbReference>
<dbReference type="InterPro" id="IPR001412">
    <property type="entry name" value="aa-tRNA-synth_I_CS"/>
</dbReference>
<dbReference type="InterPro" id="IPR001278">
    <property type="entry name" value="Arg-tRNA-ligase"/>
</dbReference>
<dbReference type="InterPro" id="IPR005148">
    <property type="entry name" value="Arg-tRNA-synth_N"/>
</dbReference>
<dbReference type="InterPro" id="IPR036695">
    <property type="entry name" value="Arg-tRNA-synth_N_sf"/>
</dbReference>
<dbReference type="InterPro" id="IPR035684">
    <property type="entry name" value="ArgRS_core"/>
</dbReference>
<dbReference type="InterPro" id="IPR008909">
    <property type="entry name" value="DALR_anticod-bd"/>
</dbReference>
<dbReference type="InterPro" id="IPR014729">
    <property type="entry name" value="Rossmann-like_a/b/a_fold"/>
</dbReference>
<dbReference type="InterPro" id="IPR009080">
    <property type="entry name" value="tRNAsynth_Ia_anticodon-bd"/>
</dbReference>
<dbReference type="NCBIfam" id="TIGR00456">
    <property type="entry name" value="argS"/>
    <property type="match status" value="1"/>
</dbReference>
<dbReference type="PANTHER" id="PTHR11956:SF5">
    <property type="entry name" value="ARGININE--TRNA LIGASE, CYTOPLASMIC"/>
    <property type="match status" value="1"/>
</dbReference>
<dbReference type="PANTHER" id="PTHR11956">
    <property type="entry name" value="ARGINYL-TRNA SYNTHETASE"/>
    <property type="match status" value="1"/>
</dbReference>
<dbReference type="Pfam" id="PF03485">
    <property type="entry name" value="Arg_tRNA_synt_N"/>
    <property type="match status" value="1"/>
</dbReference>
<dbReference type="Pfam" id="PF05746">
    <property type="entry name" value="DALR_1"/>
    <property type="match status" value="1"/>
</dbReference>
<dbReference type="Pfam" id="PF00750">
    <property type="entry name" value="tRNA-synt_1d"/>
    <property type="match status" value="1"/>
</dbReference>
<dbReference type="PRINTS" id="PR01038">
    <property type="entry name" value="TRNASYNTHARG"/>
</dbReference>
<dbReference type="SMART" id="SM01016">
    <property type="entry name" value="Arg_tRNA_synt_N"/>
    <property type="match status" value="1"/>
</dbReference>
<dbReference type="SMART" id="SM00836">
    <property type="entry name" value="DALR_1"/>
    <property type="match status" value="1"/>
</dbReference>
<dbReference type="SUPFAM" id="SSF47323">
    <property type="entry name" value="Anticodon-binding domain of a subclass of class I aminoacyl-tRNA synthetases"/>
    <property type="match status" value="1"/>
</dbReference>
<dbReference type="SUPFAM" id="SSF55190">
    <property type="entry name" value="Arginyl-tRNA synthetase (ArgRS), N-terminal 'additional' domain"/>
    <property type="match status" value="1"/>
</dbReference>
<dbReference type="SUPFAM" id="SSF52374">
    <property type="entry name" value="Nucleotidylyl transferase"/>
    <property type="match status" value="1"/>
</dbReference>
<dbReference type="PROSITE" id="PS00178">
    <property type="entry name" value="AA_TRNA_LIGASE_I"/>
    <property type="match status" value="1"/>
</dbReference>